<organism>
    <name type="scientific">Shigella flexneri</name>
    <dbReference type="NCBI Taxonomy" id="623"/>
    <lineage>
        <taxon>Bacteria</taxon>
        <taxon>Pseudomonadati</taxon>
        <taxon>Pseudomonadota</taxon>
        <taxon>Gammaproteobacteria</taxon>
        <taxon>Enterobacterales</taxon>
        <taxon>Enterobacteriaceae</taxon>
        <taxon>Shigella</taxon>
    </lineage>
</organism>
<evidence type="ECO:0000255" key="1">
    <source>
        <dbReference type="HAMAP-Rule" id="MF_01362"/>
    </source>
</evidence>
<dbReference type="EMBL" id="AE005674">
    <property type="status" value="NOT_ANNOTATED_CDS"/>
    <property type="molecule type" value="Genomic_DNA"/>
</dbReference>
<dbReference type="EMBL" id="AE014073">
    <property type="protein sequence ID" value="AAP17554.1"/>
    <property type="molecule type" value="Genomic_DNA"/>
</dbReference>
<dbReference type="RefSeq" id="WP_001216963.1">
    <property type="nucleotide sequence ID" value="NZ_WPGW01000017.1"/>
</dbReference>
<dbReference type="KEGG" id="sfx:S2341"/>
<dbReference type="PATRIC" id="fig|623.156.peg.4073"/>
<dbReference type="HOGENOM" id="CLU_220259_0_0_6"/>
<dbReference type="Proteomes" id="UP000001006">
    <property type="component" value="Chromosome"/>
</dbReference>
<dbReference type="Proteomes" id="UP000002673">
    <property type="component" value="Chromosome"/>
</dbReference>
<dbReference type="GO" id="GO:0005886">
    <property type="term" value="C:plasma membrane"/>
    <property type="evidence" value="ECO:0007669"/>
    <property type="project" value="UniProtKB-SubCell"/>
</dbReference>
<dbReference type="HAMAP" id="MF_01362">
    <property type="entry name" value="UPF0387"/>
    <property type="match status" value="1"/>
</dbReference>
<dbReference type="InterPro" id="IPR020870">
    <property type="entry name" value="UPF0387_membrane"/>
</dbReference>
<dbReference type="NCBIfam" id="NF010225">
    <property type="entry name" value="PRK13681.1"/>
    <property type="match status" value="1"/>
</dbReference>
<sequence length="35" mass="3643">MRIAKIGVIALFLFMALGGIGGVMLAGYTFILRAG</sequence>
<reference key="1">
    <citation type="journal article" date="2002" name="Nucleic Acids Res.">
        <title>Genome sequence of Shigella flexneri 2a: insights into pathogenicity through comparison with genomes of Escherichia coli K12 and O157.</title>
        <authorList>
            <person name="Jin Q."/>
            <person name="Yuan Z."/>
            <person name="Xu J."/>
            <person name="Wang Y."/>
            <person name="Shen Y."/>
            <person name="Lu W."/>
            <person name="Wang J."/>
            <person name="Liu H."/>
            <person name="Yang J."/>
            <person name="Yang F."/>
            <person name="Zhang X."/>
            <person name="Zhang J."/>
            <person name="Yang G."/>
            <person name="Wu H."/>
            <person name="Qu D."/>
            <person name="Dong J."/>
            <person name="Sun L."/>
            <person name="Xue Y."/>
            <person name="Zhao A."/>
            <person name="Gao Y."/>
            <person name="Zhu J."/>
            <person name="Kan B."/>
            <person name="Ding K."/>
            <person name="Chen S."/>
            <person name="Cheng H."/>
            <person name="Yao Z."/>
            <person name="He B."/>
            <person name="Chen R."/>
            <person name="Ma D."/>
            <person name="Qiang B."/>
            <person name="Wen Y."/>
            <person name="Hou Y."/>
            <person name="Yu J."/>
        </authorList>
    </citation>
    <scope>NUCLEOTIDE SEQUENCE [LARGE SCALE GENOMIC DNA]</scope>
    <source>
        <strain>301 / Serotype 2a</strain>
    </source>
</reference>
<reference key="2">
    <citation type="journal article" date="2003" name="Infect. Immun.">
        <title>Complete genome sequence and comparative genomics of Shigella flexneri serotype 2a strain 2457T.</title>
        <authorList>
            <person name="Wei J."/>
            <person name="Goldberg M.B."/>
            <person name="Burland V."/>
            <person name="Venkatesan M.M."/>
            <person name="Deng W."/>
            <person name="Fournier G."/>
            <person name="Mayhew G.F."/>
            <person name="Plunkett G. III"/>
            <person name="Rose D.J."/>
            <person name="Darling A."/>
            <person name="Mau B."/>
            <person name="Perna N.T."/>
            <person name="Payne S.M."/>
            <person name="Runyen-Janecky L.J."/>
            <person name="Zhou S."/>
            <person name="Schwartz D.C."/>
            <person name="Blattner F.R."/>
        </authorList>
    </citation>
    <scope>NUCLEOTIDE SEQUENCE [LARGE SCALE GENOMIC DNA]</scope>
    <source>
        <strain>ATCC 700930 / 2457T / Serotype 2a</strain>
    </source>
</reference>
<keyword id="KW-0997">Cell inner membrane</keyword>
<keyword id="KW-1003">Cell membrane</keyword>
<keyword id="KW-0472">Membrane</keyword>
<keyword id="KW-1185">Reference proteome</keyword>
<keyword id="KW-0812">Transmembrane</keyword>
<keyword id="KW-1133">Transmembrane helix</keyword>
<name>YOHO_SHIFL</name>
<comment type="subcellular location">
    <subcellularLocation>
        <location evidence="1">Cell inner membrane</location>
        <topology evidence="1">Single-pass membrane protein</topology>
    </subcellularLocation>
</comment>
<comment type="similarity">
    <text evidence="1">Belongs to the UPF0387 family.</text>
</comment>
<gene>
    <name evidence="1" type="primary">yohO</name>
    <name type="ordered locus">SF2212.1</name>
    <name type="ordered locus">S2341</name>
</gene>
<accession>Q7UC94</accession>
<protein>
    <recommendedName>
        <fullName evidence="1">UPF0387 membrane protein YohO</fullName>
    </recommendedName>
</protein>
<feature type="chain" id="PRO_0000252203" description="UPF0387 membrane protein YohO">
    <location>
        <begin position="1"/>
        <end position="35"/>
    </location>
</feature>
<feature type="transmembrane region" description="Helical" evidence="1">
    <location>
        <begin position="6"/>
        <end position="26"/>
    </location>
</feature>
<proteinExistence type="inferred from homology"/>